<feature type="chain" id="PRO_0000206455" description="3-ketoacyl-CoA thiolase">
    <location>
        <begin position="1"/>
        <end position="436"/>
    </location>
</feature>
<feature type="active site" description="Acyl-thioester intermediate" evidence="1">
    <location>
        <position position="99"/>
    </location>
</feature>
<feature type="active site" description="Proton acceptor" evidence="1">
    <location>
        <position position="392"/>
    </location>
</feature>
<feature type="active site" description="Proton acceptor" evidence="1">
    <location>
        <position position="422"/>
    </location>
</feature>
<reference key="1">
    <citation type="journal article" date="2004" name="Proc. Natl. Acad. Sci. U.S.A.">
        <title>Insights into the evolution of Yersinia pestis through whole-genome comparison with Yersinia pseudotuberculosis.</title>
        <authorList>
            <person name="Chain P.S.G."/>
            <person name="Carniel E."/>
            <person name="Larimer F.W."/>
            <person name="Lamerdin J."/>
            <person name="Stoutland P.O."/>
            <person name="Regala W.M."/>
            <person name="Georgescu A.M."/>
            <person name="Vergez L.M."/>
            <person name="Land M.L."/>
            <person name="Motin V.L."/>
            <person name="Brubaker R.R."/>
            <person name="Fowler J."/>
            <person name="Hinnebusch J."/>
            <person name="Marceau M."/>
            <person name="Medigue C."/>
            <person name="Simonet M."/>
            <person name="Chenal-Francisque V."/>
            <person name="Souza B."/>
            <person name="Dacheux D."/>
            <person name="Elliott J.M."/>
            <person name="Derbise A."/>
            <person name="Hauser L.J."/>
            <person name="Garcia E."/>
        </authorList>
    </citation>
    <scope>NUCLEOTIDE SEQUENCE [LARGE SCALE GENOMIC DNA]</scope>
    <source>
        <strain>IP32953</strain>
    </source>
</reference>
<dbReference type="EC" id="2.3.1.16" evidence="1"/>
<dbReference type="EMBL" id="BX936398">
    <property type="protein sequence ID" value="CAH21875.1"/>
    <property type="molecule type" value="Genomic_DNA"/>
</dbReference>
<dbReference type="RefSeq" id="WP_002209704.1">
    <property type="nucleotide sequence ID" value="NZ_CP009712.1"/>
</dbReference>
<dbReference type="SMR" id="Q668V0"/>
<dbReference type="GeneID" id="57975943"/>
<dbReference type="KEGG" id="ypo:BZ17_4002"/>
<dbReference type="KEGG" id="yps:YPTB2637"/>
<dbReference type="PATRIC" id="fig|273123.14.peg.4199"/>
<dbReference type="UniPathway" id="UPA00659"/>
<dbReference type="Proteomes" id="UP000001011">
    <property type="component" value="Chromosome"/>
</dbReference>
<dbReference type="GO" id="GO:0005829">
    <property type="term" value="C:cytosol"/>
    <property type="evidence" value="ECO:0007669"/>
    <property type="project" value="TreeGrafter"/>
</dbReference>
<dbReference type="GO" id="GO:0003988">
    <property type="term" value="F:acetyl-CoA C-acyltransferase activity"/>
    <property type="evidence" value="ECO:0007669"/>
    <property type="project" value="UniProtKB-UniRule"/>
</dbReference>
<dbReference type="GO" id="GO:0006635">
    <property type="term" value="P:fatty acid beta-oxidation"/>
    <property type="evidence" value="ECO:0007669"/>
    <property type="project" value="UniProtKB-UniRule"/>
</dbReference>
<dbReference type="CDD" id="cd00751">
    <property type="entry name" value="thiolase"/>
    <property type="match status" value="1"/>
</dbReference>
<dbReference type="FunFam" id="3.40.47.10:FF:000011">
    <property type="entry name" value="3-ketoacyl-CoA thiolase"/>
    <property type="match status" value="1"/>
</dbReference>
<dbReference type="Gene3D" id="3.40.47.10">
    <property type="match status" value="1"/>
</dbReference>
<dbReference type="HAMAP" id="MF_01618">
    <property type="entry name" value="FadI"/>
    <property type="match status" value="1"/>
</dbReference>
<dbReference type="InterPro" id="IPR012806">
    <property type="entry name" value="Ac-CoA_C-AcTrfase_FadI"/>
</dbReference>
<dbReference type="InterPro" id="IPR002155">
    <property type="entry name" value="Thiolase"/>
</dbReference>
<dbReference type="InterPro" id="IPR016039">
    <property type="entry name" value="Thiolase-like"/>
</dbReference>
<dbReference type="InterPro" id="IPR020615">
    <property type="entry name" value="Thiolase_acyl_enz_int_AS"/>
</dbReference>
<dbReference type="InterPro" id="IPR020610">
    <property type="entry name" value="Thiolase_AS"/>
</dbReference>
<dbReference type="InterPro" id="IPR020617">
    <property type="entry name" value="Thiolase_C"/>
</dbReference>
<dbReference type="InterPro" id="IPR020613">
    <property type="entry name" value="Thiolase_CS"/>
</dbReference>
<dbReference type="InterPro" id="IPR020616">
    <property type="entry name" value="Thiolase_N"/>
</dbReference>
<dbReference type="NCBIfam" id="TIGR01930">
    <property type="entry name" value="AcCoA-C-Actrans"/>
    <property type="match status" value="1"/>
</dbReference>
<dbReference type="NCBIfam" id="TIGR02446">
    <property type="entry name" value="FadI"/>
    <property type="match status" value="1"/>
</dbReference>
<dbReference type="NCBIfam" id="NF006516">
    <property type="entry name" value="PRK08963.1"/>
    <property type="match status" value="1"/>
</dbReference>
<dbReference type="PANTHER" id="PTHR18919:SF107">
    <property type="entry name" value="ACETYL-COA ACETYLTRANSFERASE, CYTOSOLIC"/>
    <property type="match status" value="1"/>
</dbReference>
<dbReference type="PANTHER" id="PTHR18919">
    <property type="entry name" value="ACETYL-COA C-ACYLTRANSFERASE"/>
    <property type="match status" value="1"/>
</dbReference>
<dbReference type="Pfam" id="PF02803">
    <property type="entry name" value="Thiolase_C"/>
    <property type="match status" value="1"/>
</dbReference>
<dbReference type="Pfam" id="PF00108">
    <property type="entry name" value="Thiolase_N"/>
    <property type="match status" value="1"/>
</dbReference>
<dbReference type="PIRSF" id="PIRSF000429">
    <property type="entry name" value="Ac-CoA_Ac_transf"/>
    <property type="match status" value="1"/>
</dbReference>
<dbReference type="SUPFAM" id="SSF53901">
    <property type="entry name" value="Thiolase-like"/>
    <property type="match status" value="2"/>
</dbReference>
<dbReference type="PROSITE" id="PS00098">
    <property type="entry name" value="THIOLASE_1"/>
    <property type="match status" value="1"/>
</dbReference>
<dbReference type="PROSITE" id="PS00737">
    <property type="entry name" value="THIOLASE_2"/>
    <property type="match status" value="1"/>
</dbReference>
<dbReference type="PROSITE" id="PS00099">
    <property type="entry name" value="THIOLASE_3"/>
    <property type="match status" value="1"/>
</dbReference>
<evidence type="ECO:0000255" key="1">
    <source>
        <dbReference type="HAMAP-Rule" id="MF_01618"/>
    </source>
</evidence>
<sequence>MSKPLPLVTRQGDRIVIVNGLRTPFAKQATAYHGVPAVDLGKIVVSELLARSGISSELIDQLVFGQVVQMPEAPNIAREIVLGTGMSVHTDAYSVSRACATSFQAVANVAESIIAGSVDIAIAGGADSSSVLPIGVSKALARTLVDANKARSLSQKLKLFSRLRLRDLLPVAPAVAEYSTGLRMGDTAEQMAKTYGISREDQDALALRSHQLAAEAWQQGWLHDEVMTAYIPPYREAIIEDNNIRKDSTLAQYAKLRPAFDRQHGSVTAANSTPLTDGAAAVLMMSESKAKALGLPPLGYLRSFAFSAIDVWQDMLLGPSYATPLALDRAGITLADLTLIDMHEAFAAQTLANLKMFASDTFAREKLGRSQAIGEVDMSKFNVLGGSIAYGHPFAATGARMITQTLNELRRRGGGLGLTTACAAGGLGAAMILEVE</sequence>
<accession>Q668V0</accession>
<organism>
    <name type="scientific">Yersinia pseudotuberculosis serotype I (strain IP32953)</name>
    <dbReference type="NCBI Taxonomy" id="273123"/>
    <lineage>
        <taxon>Bacteria</taxon>
        <taxon>Pseudomonadati</taxon>
        <taxon>Pseudomonadota</taxon>
        <taxon>Gammaproteobacteria</taxon>
        <taxon>Enterobacterales</taxon>
        <taxon>Yersiniaceae</taxon>
        <taxon>Yersinia</taxon>
    </lineage>
</organism>
<comment type="function">
    <text evidence="1">Catalyzes the final step of fatty acid oxidation in which acetyl-CoA is released and the CoA ester of a fatty acid two carbons shorter is formed.</text>
</comment>
<comment type="catalytic activity">
    <reaction evidence="1">
        <text>an acyl-CoA + acetyl-CoA = a 3-oxoacyl-CoA + CoA</text>
        <dbReference type="Rhea" id="RHEA:21564"/>
        <dbReference type="ChEBI" id="CHEBI:57287"/>
        <dbReference type="ChEBI" id="CHEBI:57288"/>
        <dbReference type="ChEBI" id="CHEBI:58342"/>
        <dbReference type="ChEBI" id="CHEBI:90726"/>
        <dbReference type="EC" id="2.3.1.16"/>
    </reaction>
</comment>
<comment type="pathway">
    <text evidence="1">Lipid metabolism; fatty acid beta-oxidation.</text>
</comment>
<comment type="subunit">
    <text evidence="1">Heterotetramer of two alpha chains (FadJ) and two beta chains (FadI).</text>
</comment>
<comment type="subcellular location">
    <subcellularLocation>
        <location evidence="1">Cytoplasm</location>
    </subcellularLocation>
</comment>
<comment type="similarity">
    <text evidence="1">Belongs to the thiolase-like superfamily. Thiolase family.</text>
</comment>
<proteinExistence type="inferred from homology"/>
<name>FADI_YERPS</name>
<protein>
    <recommendedName>
        <fullName evidence="1">3-ketoacyl-CoA thiolase</fullName>
        <ecNumber evidence="1">2.3.1.16</ecNumber>
    </recommendedName>
    <alternativeName>
        <fullName evidence="1">ACSs</fullName>
    </alternativeName>
    <alternativeName>
        <fullName evidence="1">Acetyl-CoA acyltransferase</fullName>
    </alternativeName>
    <alternativeName>
        <fullName evidence="1">Acyl-CoA ligase</fullName>
    </alternativeName>
    <alternativeName>
        <fullName evidence="1">Beta-ketothiolase</fullName>
    </alternativeName>
    <alternativeName>
        <fullName evidence="1">Fatty acid oxidation complex subunit beta</fullName>
    </alternativeName>
</protein>
<gene>
    <name evidence="1" type="primary">fadI</name>
    <name type="ordered locus">YPTB2637</name>
</gene>
<keyword id="KW-0012">Acyltransferase</keyword>
<keyword id="KW-0963">Cytoplasm</keyword>
<keyword id="KW-0276">Fatty acid metabolism</keyword>
<keyword id="KW-0442">Lipid degradation</keyword>
<keyword id="KW-0443">Lipid metabolism</keyword>
<keyword id="KW-0808">Transferase</keyword>